<proteinExistence type="inferred from homology"/>
<dbReference type="EC" id="2.7.4.9" evidence="1"/>
<dbReference type="EMBL" id="AAFI02000151">
    <property type="protein sequence ID" value="EAL62422.1"/>
    <property type="molecule type" value="Genomic_DNA"/>
</dbReference>
<dbReference type="RefSeq" id="XP_635930.1">
    <property type="nucleotide sequence ID" value="XM_630838.1"/>
</dbReference>
<dbReference type="SMR" id="Q54GN2"/>
<dbReference type="FunCoup" id="Q54GN2">
    <property type="interactions" value="342"/>
</dbReference>
<dbReference type="STRING" id="44689.Q54GN2"/>
<dbReference type="PaxDb" id="44689-DDB0230101"/>
<dbReference type="EnsemblProtists" id="EAL62422">
    <property type="protein sequence ID" value="EAL62422"/>
    <property type="gene ID" value="DDB_G0290033"/>
</dbReference>
<dbReference type="GeneID" id="8627451"/>
<dbReference type="KEGG" id="ddi:DDB_G0290033"/>
<dbReference type="dictyBase" id="DDB_G0290033">
    <property type="gene designation" value="dtymk"/>
</dbReference>
<dbReference type="VEuPathDB" id="AmoebaDB:DDB_G0290033"/>
<dbReference type="eggNOG" id="KOG3327">
    <property type="taxonomic scope" value="Eukaryota"/>
</dbReference>
<dbReference type="HOGENOM" id="CLU_049131_3_2_1"/>
<dbReference type="InParanoid" id="Q54GN2"/>
<dbReference type="OMA" id="ANRWECA"/>
<dbReference type="PhylomeDB" id="Q54GN2"/>
<dbReference type="Reactome" id="R-DDI-499943">
    <property type="pathway name" value="Interconversion of nucleotide di- and triphosphates"/>
</dbReference>
<dbReference type="UniPathway" id="UPA00575"/>
<dbReference type="PRO" id="PR:Q54GN2"/>
<dbReference type="Proteomes" id="UP000002195">
    <property type="component" value="Chromosome 5"/>
</dbReference>
<dbReference type="GO" id="GO:0005737">
    <property type="term" value="C:cytoplasm"/>
    <property type="evidence" value="ECO:0000318"/>
    <property type="project" value="GO_Central"/>
</dbReference>
<dbReference type="GO" id="GO:0005739">
    <property type="term" value="C:mitochondrion"/>
    <property type="evidence" value="ECO:0000318"/>
    <property type="project" value="GO_Central"/>
</dbReference>
<dbReference type="GO" id="GO:0005634">
    <property type="term" value="C:nucleus"/>
    <property type="evidence" value="ECO:0000318"/>
    <property type="project" value="GO_Central"/>
</dbReference>
<dbReference type="GO" id="GO:0005524">
    <property type="term" value="F:ATP binding"/>
    <property type="evidence" value="ECO:0007669"/>
    <property type="project" value="UniProtKB-KW"/>
</dbReference>
<dbReference type="GO" id="GO:0004798">
    <property type="term" value="F:dTMP kinase activity"/>
    <property type="evidence" value="ECO:0000250"/>
    <property type="project" value="dictyBase"/>
</dbReference>
<dbReference type="GO" id="GO:0004550">
    <property type="term" value="F:nucleoside diphosphate kinase activity"/>
    <property type="evidence" value="ECO:0000318"/>
    <property type="project" value="GO_Central"/>
</dbReference>
<dbReference type="GO" id="GO:0009041">
    <property type="term" value="F:UMP/dUMP kinase activity"/>
    <property type="evidence" value="ECO:0000250"/>
    <property type="project" value="dictyBase"/>
</dbReference>
<dbReference type="GO" id="GO:0006233">
    <property type="term" value="P:dTDP biosynthetic process"/>
    <property type="evidence" value="ECO:0000250"/>
    <property type="project" value="dictyBase"/>
</dbReference>
<dbReference type="GO" id="GO:0006235">
    <property type="term" value="P:dTTP biosynthetic process"/>
    <property type="evidence" value="ECO:0000250"/>
    <property type="project" value="dictyBase"/>
</dbReference>
<dbReference type="GO" id="GO:0006227">
    <property type="term" value="P:dUDP biosynthetic process"/>
    <property type="evidence" value="ECO:0000250"/>
    <property type="project" value="dictyBase"/>
</dbReference>
<dbReference type="CDD" id="cd01672">
    <property type="entry name" value="TMPK"/>
    <property type="match status" value="1"/>
</dbReference>
<dbReference type="FunFam" id="3.40.50.300:FF:000679">
    <property type="entry name" value="Thymidylate kinase"/>
    <property type="match status" value="1"/>
</dbReference>
<dbReference type="Gene3D" id="3.40.50.300">
    <property type="entry name" value="P-loop containing nucleotide triphosphate hydrolases"/>
    <property type="match status" value="1"/>
</dbReference>
<dbReference type="HAMAP" id="MF_00165">
    <property type="entry name" value="Thymidylate_kinase"/>
    <property type="match status" value="1"/>
</dbReference>
<dbReference type="InterPro" id="IPR027417">
    <property type="entry name" value="P-loop_NTPase"/>
</dbReference>
<dbReference type="InterPro" id="IPR039430">
    <property type="entry name" value="Thymidylate_kin-like_dom"/>
</dbReference>
<dbReference type="InterPro" id="IPR018095">
    <property type="entry name" value="Thymidylate_kin_CS"/>
</dbReference>
<dbReference type="InterPro" id="IPR018094">
    <property type="entry name" value="Thymidylate_kinase"/>
</dbReference>
<dbReference type="NCBIfam" id="TIGR00041">
    <property type="entry name" value="DTMP_kinase"/>
    <property type="match status" value="1"/>
</dbReference>
<dbReference type="PANTHER" id="PTHR10344">
    <property type="entry name" value="THYMIDYLATE KINASE"/>
    <property type="match status" value="1"/>
</dbReference>
<dbReference type="PANTHER" id="PTHR10344:SF1">
    <property type="entry name" value="THYMIDYLATE KINASE"/>
    <property type="match status" value="1"/>
</dbReference>
<dbReference type="Pfam" id="PF02223">
    <property type="entry name" value="Thymidylate_kin"/>
    <property type="match status" value="1"/>
</dbReference>
<dbReference type="SUPFAM" id="SSF52540">
    <property type="entry name" value="P-loop containing nucleoside triphosphate hydrolases"/>
    <property type="match status" value="1"/>
</dbReference>
<dbReference type="PROSITE" id="PS01331">
    <property type="entry name" value="THYMIDYLATE_KINASE"/>
    <property type="match status" value="1"/>
</dbReference>
<protein>
    <recommendedName>
        <fullName>Thymidylate kinase</fullName>
        <ecNumber evidence="1">2.7.4.9</ecNumber>
    </recommendedName>
    <alternativeName>
        <fullName>dTMP kinase</fullName>
    </alternativeName>
</protein>
<organism>
    <name type="scientific">Dictyostelium discoideum</name>
    <name type="common">Social amoeba</name>
    <dbReference type="NCBI Taxonomy" id="44689"/>
    <lineage>
        <taxon>Eukaryota</taxon>
        <taxon>Amoebozoa</taxon>
        <taxon>Evosea</taxon>
        <taxon>Eumycetozoa</taxon>
        <taxon>Dictyostelia</taxon>
        <taxon>Dictyosteliales</taxon>
        <taxon>Dictyosteliaceae</taxon>
        <taxon>Dictyostelium</taxon>
    </lineage>
</organism>
<keyword id="KW-0067">ATP-binding</keyword>
<keyword id="KW-0418">Kinase</keyword>
<keyword id="KW-0545">Nucleotide biosynthesis</keyword>
<keyword id="KW-0547">Nucleotide-binding</keyword>
<keyword id="KW-1185">Reference proteome</keyword>
<keyword id="KW-0808">Transferase</keyword>
<evidence type="ECO:0000250" key="1">
    <source>
        <dbReference type="UniProtKB" id="P23919"/>
    </source>
</evidence>
<evidence type="ECO:0000305" key="2"/>
<gene>
    <name type="primary">dtymk</name>
    <name type="synonym">tmkA</name>
    <name type="ORF">DDB_G0290033</name>
</gene>
<accession>Q54GN2</accession>
<feature type="chain" id="PRO_0000328101" description="Thymidylate kinase">
    <location>
        <begin position="1"/>
        <end position="222"/>
    </location>
</feature>
<feature type="region of interest" description="LID" evidence="1">
    <location>
        <begin position="146"/>
        <end position="170"/>
    </location>
</feature>
<feature type="binding site" evidence="1">
    <location>
        <begin position="29"/>
        <end position="34"/>
    </location>
    <ligand>
        <name>ATP</name>
        <dbReference type="ChEBI" id="CHEBI:30616"/>
    </ligand>
</feature>
<feature type="binding site" evidence="1">
    <location>
        <position position="111"/>
    </location>
    <ligand>
        <name>ATP</name>
        <dbReference type="ChEBI" id="CHEBI:30616"/>
    </ligand>
</feature>
<name>KTHY_DICDI</name>
<comment type="function">
    <text evidence="1">Catalyzes the phosphorylation of thymidine monophosphate (dTMP) to thymidine diphosphate (dTDP), the immediate precursor for the DNA building block dTTP, with ATP as the preferred phosphoryl donor in the presence of Mg(2+).</text>
</comment>
<comment type="catalytic activity">
    <reaction evidence="1">
        <text>dTMP + ATP = dTDP + ADP</text>
        <dbReference type="Rhea" id="RHEA:13517"/>
        <dbReference type="ChEBI" id="CHEBI:30616"/>
        <dbReference type="ChEBI" id="CHEBI:58369"/>
        <dbReference type="ChEBI" id="CHEBI:63528"/>
        <dbReference type="ChEBI" id="CHEBI:456216"/>
        <dbReference type="EC" id="2.7.4.9"/>
    </reaction>
</comment>
<comment type="cofactor">
    <cofactor evidence="1">
        <name>Mg(2+)</name>
        <dbReference type="ChEBI" id="CHEBI:18420"/>
    </cofactor>
</comment>
<comment type="pathway">
    <text evidence="1">Pyrimidine metabolism; dTTP biosynthesis.</text>
</comment>
<comment type="subunit">
    <text evidence="1">Homodimer.</text>
</comment>
<comment type="similarity">
    <text evidence="2">Belongs to the thymidylate kinase family.</text>
</comment>
<reference key="1">
    <citation type="journal article" date="2005" name="Nature">
        <title>The genome of the social amoeba Dictyostelium discoideum.</title>
        <authorList>
            <person name="Eichinger L."/>
            <person name="Pachebat J.A."/>
            <person name="Gloeckner G."/>
            <person name="Rajandream M.A."/>
            <person name="Sucgang R."/>
            <person name="Berriman M."/>
            <person name="Song J."/>
            <person name="Olsen R."/>
            <person name="Szafranski K."/>
            <person name="Xu Q."/>
            <person name="Tunggal B."/>
            <person name="Kummerfeld S."/>
            <person name="Madera M."/>
            <person name="Konfortov B.A."/>
            <person name="Rivero F."/>
            <person name="Bankier A.T."/>
            <person name="Lehmann R."/>
            <person name="Hamlin N."/>
            <person name="Davies R."/>
            <person name="Gaudet P."/>
            <person name="Fey P."/>
            <person name="Pilcher K."/>
            <person name="Chen G."/>
            <person name="Saunders D."/>
            <person name="Sodergren E.J."/>
            <person name="Davis P."/>
            <person name="Kerhornou A."/>
            <person name="Nie X."/>
            <person name="Hall N."/>
            <person name="Anjard C."/>
            <person name="Hemphill L."/>
            <person name="Bason N."/>
            <person name="Farbrother P."/>
            <person name="Desany B."/>
            <person name="Just E."/>
            <person name="Morio T."/>
            <person name="Rost R."/>
            <person name="Churcher C.M."/>
            <person name="Cooper J."/>
            <person name="Haydock S."/>
            <person name="van Driessche N."/>
            <person name="Cronin A."/>
            <person name="Goodhead I."/>
            <person name="Muzny D.M."/>
            <person name="Mourier T."/>
            <person name="Pain A."/>
            <person name="Lu M."/>
            <person name="Harper D."/>
            <person name="Lindsay R."/>
            <person name="Hauser H."/>
            <person name="James K.D."/>
            <person name="Quiles M."/>
            <person name="Madan Babu M."/>
            <person name="Saito T."/>
            <person name="Buchrieser C."/>
            <person name="Wardroper A."/>
            <person name="Felder M."/>
            <person name="Thangavelu M."/>
            <person name="Johnson D."/>
            <person name="Knights A."/>
            <person name="Loulseged H."/>
            <person name="Mungall K.L."/>
            <person name="Oliver K."/>
            <person name="Price C."/>
            <person name="Quail M.A."/>
            <person name="Urushihara H."/>
            <person name="Hernandez J."/>
            <person name="Rabbinowitsch E."/>
            <person name="Steffen D."/>
            <person name="Sanders M."/>
            <person name="Ma J."/>
            <person name="Kohara Y."/>
            <person name="Sharp S."/>
            <person name="Simmonds M.N."/>
            <person name="Spiegler S."/>
            <person name="Tivey A."/>
            <person name="Sugano S."/>
            <person name="White B."/>
            <person name="Walker D."/>
            <person name="Woodward J.R."/>
            <person name="Winckler T."/>
            <person name="Tanaka Y."/>
            <person name="Shaulsky G."/>
            <person name="Schleicher M."/>
            <person name="Weinstock G.M."/>
            <person name="Rosenthal A."/>
            <person name="Cox E.C."/>
            <person name="Chisholm R.L."/>
            <person name="Gibbs R.A."/>
            <person name="Loomis W.F."/>
            <person name="Platzer M."/>
            <person name="Kay R.R."/>
            <person name="Williams J.G."/>
            <person name="Dear P.H."/>
            <person name="Noegel A.A."/>
            <person name="Barrell B.G."/>
            <person name="Kuspa A."/>
        </authorList>
    </citation>
    <scope>NUCLEOTIDE SEQUENCE [LARGE SCALE GENOMIC DNA]</scope>
    <source>
        <strain>AX4</strain>
    </source>
</reference>
<sequence length="222" mass="25582">MINTKKEEGEEEKTMIKRGLFILFEGVDRVGKSTQVQSLTNHISNVQKLPTKSLRFPDRTTPIGQIINQYLQNATNMDDRALHLLFSSNRWEARDSILELLNNGTNIVVDRYSYSGVAYSAAKGIDFDWCYACEKGLPKPDLIFYLSMSSEDATKRGEYGGERYEKLEFQKKIKQIYEEKLVDDQWKIINANRSIDEISNEISSIFDSEFKKIQLTSIAKLE</sequence>